<reference key="1">
    <citation type="journal article" date="2007" name="Science">
        <title>Legumes symbioses: absence of nod genes in photosynthetic bradyrhizobia.</title>
        <authorList>
            <person name="Giraud E."/>
            <person name="Moulin L."/>
            <person name="Vallenet D."/>
            <person name="Barbe V."/>
            <person name="Cytryn E."/>
            <person name="Avarre J.-C."/>
            <person name="Jaubert M."/>
            <person name="Simon D."/>
            <person name="Cartieaux F."/>
            <person name="Prin Y."/>
            <person name="Bena G."/>
            <person name="Hannibal L."/>
            <person name="Fardoux J."/>
            <person name="Kojadinovic M."/>
            <person name="Vuillet L."/>
            <person name="Lajus A."/>
            <person name="Cruveiller S."/>
            <person name="Rouy Z."/>
            <person name="Mangenot S."/>
            <person name="Segurens B."/>
            <person name="Dossat C."/>
            <person name="Franck W.L."/>
            <person name="Chang W.-S."/>
            <person name="Saunders E."/>
            <person name="Bruce D."/>
            <person name="Richardson P."/>
            <person name="Normand P."/>
            <person name="Dreyfus B."/>
            <person name="Pignol D."/>
            <person name="Stacey G."/>
            <person name="Emerich D."/>
            <person name="Vermeglio A."/>
            <person name="Medigue C."/>
            <person name="Sadowsky M."/>
        </authorList>
    </citation>
    <scope>NUCLEOTIDE SEQUENCE [LARGE SCALE GENOMIC DNA]</scope>
    <source>
        <strain>BTAi1 / ATCC BAA-1182</strain>
    </source>
</reference>
<organism>
    <name type="scientific">Bradyrhizobium sp. (strain BTAi1 / ATCC BAA-1182)</name>
    <dbReference type="NCBI Taxonomy" id="288000"/>
    <lineage>
        <taxon>Bacteria</taxon>
        <taxon>Pseudomonadati</taxon>
        <taxon>Pseudomonadota</taxon>
        <taxon>Alphaproteobacteria</taxon>
        <taxon>Hyphomicrobiales</taxon>
        <taxon>Nitrobacteraceae</taxon>
        <taxon>Bradyrhizobium</taxon>
    </lineage>
</organism>
<gene>
    <name evidence="1" type="primary">acpS</name>
    <name type="ordered locus">BBta_4685</name>
</gene>
<name>ACPS_BRASB</name>
<evidence type="ECO:0000255" key="1">
    <source>
        <dbReference type="HAMAP-Rule" id="MF_00101"/>
    </source>
</evidence>
<keyword id="KW-0963">Cytoplasm</keyword>
<keyword id="KW-0275">Fatty acid biosynthesis</keyword>
<keyword id="KW-0276">Fatty acid metabolism</keyword>
<keyword id="KW-0444">Lipid biosynthesis</keyword>
<keyword id="KW-0443">Lipid metabolism</keyword>
<keyword id="KW-0460">Magnesium</keyword>
<keyword id="KW-0479">Metal-binding</keyword>
<keyword id="KW-1185">Reference proteome</keyword>
<keyword id="KW-0808">Transferase</keyword>
<dbReference type="EC" id="2.7.8.7" evidence="1"/>
<dbReference type="EMBL" id="CP000494">
    <property type="protein sequence ID" value="ABQ36713.1"/>
    <property type="molecule type" value="Genomic_DNA"/>
</dbReference>
<dbReference type="RefSeq" id="WP_012044700.1">
    <property type="nucleotide sequence ID" value="NC_009485.1"/>
</dbReference>
<dbReference type="SMR" id="A5EKL9"/>
<dbReference type="STRING" id="288000.BBta_4685"/>
<dbReference type="KEGG" id="bbt:BBta_4685"/>
<dbReference type="eggNOG" id="COG0736">
    <property type="taxonomic scope" value="Bacteria"/>
</dbReference>
<dbReference type="HOGENOM" id="CLU_089696_0_2_5"/>
<dbReference type="OrthoDB" id="517356at2"/>
<dbReference type="Proteomes" id="UP000000246">
    <property type="component" value="Chromosome"/>
</dbReference>
<dbReference type="GO" id="GO:0005737">
    <property type="term" value="C:cytoplasm"/>
    <property type="evidence" value="ECO:0007669"/>
    <property type="project" value="UniProtKB-SubCell"/>
</dbReference>
<dbReference type="GO" id="GO:0008897">
    <property type="term" value="F:holo-[acyl-carrier-protein] synthase activity"/>
    <property type="evidence" value="ECO:0007669"/>
    <property type="project" value="UniProtKB-UniRule"/>
</dbReference>
<dbReference type="GO" id="GO:0000287">
    <property type="term" value="F:magnesium ion binding"/>
    <property type="evidence" value="ECO:0007669"/>
    <property type="project" value="UniProtKB-UniRule"/>
</dbReference>
<dbReference type="GO" id="GO:0006633">
    <property type="term" value="P:fatty acid biosynthetic process"/>
    <property type="evidence" value="ECO:0007669"/>
    <property type="project" value="UniProtKB-UniRule"/>
</dbReference>
<dbReference type="Gene3D" id="3.90.470.20">
    <property type="entry name" value="4'-phosphopantetheinyl transferase domain"/>
    <property type="match status" value="1"/>
</dbReference>
<dbReference type="HAMAP" id="MF_00101">
    <property type="entry name" value="AcpS"/>
    <property type="match status" value="1"/>
</dbReference>
<dbReference type="InterPro" id="IPR008278">
    <property type="entry name" value="4-PPantetheinyl_Trfase_dom"/>
</dbReference>
<dbReference type="InterPro" id="IPR037143">
    <property type="entry name" value="4-PPantetheinyl_Trfase_dom_sf"/>
</dbReference>
<dbReference type="InterPro" id="IPR002582">
    <property type="entry name" value="ACPS"/>
</dbReference>
<dbReference type="InterPro" id="IPR004568">
    <property type="entry name" value="Ppantetheine-prot_Trfase_dom"/>
</dbReference>
<dbReference type="NCBIfam" id="TIGR00516">
    <property type="entry name" value="acpS"/>
    <property type="match status" value="1"/>
</dbReference>
<dbReference type="NCBIfam" id="TIGR00556">
    <property type="entry name" value="pantethn_trn"/>
    <property type="match status" value="1"/>
</dbReference>
<dbReference type="Pfam" id="PF01648">
    <property type="entry name" value="ACPS"/>
    <property type="match status" value="1"/>
</dbReference>
<dbReference type="SUPFAM" id="SSF56214">
    <property type="entry name" value="4'-phosphopantetheinyl transferase"/>
    <property type="match status" value="1"/>
</dbReference>
<proteinExistence type="inferred from homology"/>
<protein>
    <recommendedName>
        <fullName evidence="1">Holo-[acyl-carrier-protein] synthase</fullName>
        <shortName evidence="1">Holo-ACP synthase</shortName>
        <ecNumber evidence="1">2.7.8.7</ecNumber>
    </recommendedName>
    <alternativeName>
        <fullName evidence="1">4'-phosphopantetheinyl transferase AcpS</fullName>
    </alternativeName>
</protein>
<accession>A5EKL9</accession>
<sequence>MIIGIGSDLIDIRRVAEVIERHGDRFLNRIFTEAERAKAERRAKNEKMVVATYAKRFAAKEACSKALGTGIRHGVWWRDMGVVNLPGGRPTMQLTGGAAERLKALTPAGHDARIDLSITDDWPLAQAFVIISAVSLATS</sequence>
<comment type="function">
    <text evidence="1">Transfers the 4'-phosphopantetheine moiety from coenzyme A to a Ser of acyl-carrier-protein.</text>
</comment>
<comment type="catalytic activity">
    <reaction evidence="1">
        <text>apo-[ACP] + CoA = holo-[ACP] + adenosine 3',5'-bisphosphate + H(+)</text>
        <dbReference type="Rhea" id="RHEA:12068"/>
        <dbReference type="Rhea" id="RHEA-COMP:9685"/>
        <dbReference type="Rhea" id="RHEA-COMP:9690"/>
        <dbReference type="ChEBI" id="CHEBI:15378"/>
        <dbReference type="ChEBI" id="CHEBI:29999"/>
        <dbReference type="ChEBI" id="CHEBI:57287"/>
        <dbReference type="ChEBI" id="CHEBI:58343"/>
        <dbReference type="ChEBI" id="CHEBI:64479"/>
        <dbReference type="EC" id="2.7.8.7"/>
    </reaction>
</comment>
<comment type="cofactor">
    <cofactor evidence="1">
        <name>Mg(2+)</name>
        <dbReference type="ChEBI" id="CHEBI:18420"/>
    </cofactor>
</comment>
<comment type="subcellular location">
    <subcellularLocation>
        <location evidence="1">Cytoplasm</location>
    </subcellularLocation>
</comment>
<comment type="similarity">
    <text evidence="1">Belongs to the P-Pant transferase superfamily. AcpS family.</text>
</comment>
<feature type="chain" id="PRO_1000008391" description="Holo-[acyl-carrier-protein] synthase">
    <location>
        <begin position="1"/>
        <end position="139"/>
    </location>
</feature>
<feature type="binding site" evidence="1">
    <location>
        <position position="8"/>
    </location>
    <ligand>
        <name>Mg(2+)</name>
        <dbReference type="ChEBI" id="CHEBI:18420"/>
    </ligand>
</feature>
<feature type="binding site" evidence="1">
    <location>
        <position position="61"/>
    </location>
    <ligand>
        <name>Mg(2+)</name>
        <dbReference type="ChEBI" id="CHEBI:18420"/>
    </ligand>
</feature>